<evidence type="ECO:0000255" key="1">
    <source>
        <dbReference type="HAMAP-Rule" id="MF_01052"/>
    </source>
</evidence>
<protein>
    <recommendedName>
        <fullName evidence="1">Crotonobetainyl-CoA reductase</fullName>
        <ecNumber evidence="1">1.3.8.13</ecNumber>
    </recommendedName>
    <alternativeName>
        <fullName evidence="1">Crotonobetainyl-CoA dehydrogenase</fullName>
    </alternativeName>
</protein>
<keyword id="KW-0963">Cytoplasm</keyword>
<keyword id="KW-0274">FAD</keyword>
<keyword id="KW-0285">Flavoprotein</keyword>
<keyword id="KW-0560">Oxidoreductase</keyword>
<keyword id="KW-1185">Reference proteome</keyword>
<comment type="function">
    <text evidence="1">Catalyzes the reduction of crotonobetainyl-CoA to gamma-butyrobetainyl-CoA.</text>
</comment>
<comment type="catalytic activity">
    <reaction evidence="1">
        <text>4-(trimethylamino)butanoyl-CoA + oxidized [electron-transfer flavoprotein] + H(+) = crotonobetainyl-CoA + reduced [electron-transfer flavoprotein]</text>
        <dbReference type="Rhea" id="RHEA:51584"/>
        <dbReference type="Rhea" id="RHEA-COMP:10685"/>
        <dbReference type="Rhea" id="RHEA-COMP:10686"/>
        <dbReference type="ChEBI" id="CHEBI:15378"/>
        <dbReference type="ChEBI" id="CHEBI:57692"/>
        <dbReference type="ChEBI" id="CHEBI:58307"/>
        <dbReference type="ChEBI" id="CHEBI:60933"/>
        <dbReference type="ChEBI" id="CHEBI:61513"/>
        <dbReference type="EC" id="1.3.8.13"/>
    </reaction>
</comment>
<comment type="cofactor">
    <cofactor evidence="1">
        <name>FAD</name>
        <dbReference type="ChEBI" id="CHEBI:57692"/>
    </cofactor>
</comment>
<comment type="pathway">
    <text evidence="1">Amine and polyamine metabolism; carnitine metabolism.</text>
</comment>
<comment type="subunit">
    <text evidence="1">Homotetramer.</text>
</comment>
<comment type="subcellular location">
    <subcellularLocation>
        <location evidence="1">Cytoplasm</location>
    </subcellularLocation>
</comment>
<comment type="similarity">
    <text evidence="1">Belongs to the acyl-CoA dehydrogenase family.</text>
</comment>
<dbReference type="EC" id="1.3.8.13" evidence="1"/>
<dbReference type="EMBL" id="CP000468">
    <property type="protein sequence ID" value="ABI99528.1"/>
    <property type="molecule type" value="Genomic_DNA"/>
</dbReference>
<dbReference type="RefSeq" id="WP_000347117.1">
    <property type="nucleotide sequence ID" value="NZ_CADILS010000013.1"/>
</dbReference>
<dbReference type="SMR" id="A1A789"/>
<dbReference type="GeneID" id="93777396"/>
<dbReference type="KEGG" id="ecv:APECO1_1942"/>
<dbReference type="HOGENOM" id="CLU_018204_0_2_6"/>
<dbReference type="UniPathway" id="UPA00117"/>
<dbReference type="Proteomes" id="UP000008216">
    <property type="component" value="Chromosome"/>
</dbReference>
<dbReference type="GO" id="GO:0005737">
    <property type="term" value="C:cytoplasm"/>
    <property type="evidence" value="ECO:0007669"/>
    <property type="project" value="UniProtKB-SubCell"/>
</dbReference>
<dbReference type="GO" id="GO:0003995">
    <property type="term" value="F:acyl-CoA dehydrogenase activity"/>
    <property type="evidence" value="ECO:0007669"/>
    <property type="project" value="InterPro"/>
</dbReference>
<dbReference type="GO" id="GO:0050660">
    <property type="term" value="F:flavin adenine dinucleotide binding"/>
    <property type="evidence" value="ECO:0007669"/>
    <property type="project" value="InterPro"/>
</dbReference>
<dbReference type="GO" id="GO:0009437">
    <property type="term" value="P:carnitine metabolic process"/>
    <property type="evidence" value="ECO:0007669"/>
    <property type="project" value="UniProtKB-UniRule"/>
</dbReference>
<dbReference type="CDD" id="cd00567">
    <property type="entry name" value="ACAD"/>
    <property type="match status" value="1"/>
</dbReference>
<dbReference type="FunFam" id="1.20.140.10:FF:000001">
    <property type="entry name" value="Acyl-CoA dehydrogenase"/>
    <property type="match status" value="1"/>
</dbReference>
<dbReference type="FunFam" id="2.40.110.10:FF:000002">
    <property type="entry name" value="Acyl-CoA dehydrogenase fadE12"/>
    <property type="match status" value="1"/>
</dbReference>
<dbReference type="FunFam" id="1.10.540.10:FF:000005">
    <property type="entry name" value="Crotonobetainyl-CoA reductase"/>
    <property type="match status" value="1"/>
</dbReference>
<dbReference type="Gene3D" id="1.10.540.10">
    <property type="entry name" value="Acyl-CoA dehydrogenase/oxidase, N-terminal domain"/>
    <property type="match status" value="1"/>
</dbReference>
<dbReference type="Gene3D" id="2.40.110.10">
    <property type="entry name" value="Butyryl-CoA Dehydrogenase, subunit A, domain 2"/>
    <property type="match status" value="1"/>
</dbReference>
<dbReference type="Gene3D" id="1.20.140.10">
    <property type="entry name" value="Butyryl-CoA Dehydrogenase, subunit A, domain 3"/>
    <property type="match status" value="1"/>
</dbReference>
<dbReference type="HAMAP" id="MF_01052">
    <property type="entry name" value="CaiA"/>
    <property type="match status" value="1"/>
</dbReference>
<dbReference type="InterPro" id="IPR006089">
    <property type="entry name" value="Acyl-CoA_DH_CS"/>
</dbReference>
<dbReference type="InterPro" id="IPR006091">
    <property type="entry name" value="Acyl-CoA_Oxase/DH_mid-dom"/>
</dbReference>
<dbReference type="InterPro" id="IPR046373">
    <property type="entry name" value="Acyl-CoA_Oxase/DH_mid-dom_sf"/>
</dbReference>
<dbReference type="InterPro" id="IPR036250">
    <property type="entry name" value="AcylCo_DH-like_C"/>
</dbReference>
<dbReference type="InterPro" id="IPR009075">
    <property type="entry name" value="AcylCo_DH/oxidase_C"/>
</dbReference>
<dbReference type="InterPro" id="IPR013786">
    <property type="entry name" value="AcylCoA_DH/ox_N"/>
</dbReference>
<dbReference type="InterPro" id="IPR037069">
    <property type="entry name" value="AcylCoA_DH/ox_N_sf"/>
</dbReference>
<dbReference type="InterPro" id="IPR009100">
    <property type="entry name" value="AcylCoA_DH/oxidase_NM_dom_sf"/>
</dbReference>
<dbReference type="InterPro" id="IPR023450">
    <property type="entry name" value="CaiA"/>
</dbReference>
<dbReference type="NCBIfam" id="NF002885">
    <property type="entry name" value="PRK03354.1"/>
    <property type="match status" value="1"/>
</dbReference>
<dbReference type="PANTHER" id="PTHR43884">
    <property type="entry name" value="ACYL-COA DEHYDROGENASE"/>
    <property type="match status" value="1"/>
</dbReference>
<dbReference type="PANTHER" id="PTHR43884:SF12">
    <property type="entry name" value="ISOVALERYL-COA DEHYDROGENASE, MITOCHONDRIAL-RELATED"/>
    <property type="match status" value="1"/>
</dbReference>
<dbReference type="Pfam" id="PF00441">
    <property type="entry name" value="Acyl-CoA_dh_1"/>
    <property type="match status" value="1"/>
</dbReference>
<dbReference type="Pfam" id="PF02770">
    <property type="entry name" value="Acyl-CoA_dh_M"/>
    <property type="match status" value="1"/>
</dbReference>
<dbReference type="Pfam" id="PF02771">
    <property type="entry name" value="Acyl-CoA_dh_N"/>
    <property type="match status" value="1"/>
</dbReference>
<dbReference type="PIRSF" id="PIRSF016578">
    <property type="entry name" value="HsaA"/>
    <property type="match status" value="1"/>
</dbReference>
<dbReference type="SUPFAM" id="SSF47203">
    <property type="entry name" value="Acyl-CoA dehydrogenase C-terminal domain-like"/>
    <property type="match status" value="1"/>
</dbReference>
<dbReference type="SUPFAM" id="SSF56645">
    <property type="entry name" value="Acyl-CoA dehydrogenase NM domain-like"/>
    <property type="match status" value="1"/>
</dbReference>
<dbReference type="PROSITE" id="PS00072">
    <property type="entry name" value="ACYL_COA_DH_1"/>
    <property type="match status" value="1"/>
</dbReference>
<dbReference type="PROSITE" id="PS00073">
    <property type="entry name" value="ACYL_COA_DH_2"/>
    <property type="match status" value="1"/>
</dbReference>
<gene>
    <name evidence="1" type="primary">caiA</name>
    <name type="ordered locus">Ecok1_00350</name>
    <name type="ORF">APECO1_1942</name>
</gene>
<proteinExistence type="inferred from homology"/>
<feature type="chain" id="PRO_1000064347" description="Crotonobetainyl-CoA reductase">
    <location>
        <begin position="1"/>
        <end position="380"/>
    </location>
</feature>
<reference key="1">
    <citation type="journal article" date="2007" name="J. Bacteriol.">
        <title>The genome sequence of avian pathogenic Escherichia coli strain O1:K1:H7 shares strong similarities with human extraintestinal pathogenic E. coli genomes.</title>
        <authorList>
            <person name="Johnson T.J."/>
            <person name="Kariyawasam S."/>
            <person name="Wannemuehler Y."/>
            <person name="Mangiamele P."/>
            <person name="Johnson S.J."/>
            <person name="Doetkott C."/>
            <person name="Skyberg J.A."/>
            <person name="Lynne A.M."/>
            <person name="Johnson J.R."/>
            <person name="Nolan L.K."/>
        </authorList>
    </citation>
    <scope>NUCLEOTIDE SEQUENCE [LARGE SCALE GENOMIC DNA]</scope>
</reference>
<accession>A1A789</accession>
<name>CAIA_ECOK1</name>
<sequence length="380" mass="42558">MDFNLNDEQELFVAGIRELMASENWEAYFAECDRDSVYPERFVKALADMGIDSLLIPEEHGGLDAGFVTLAAVWMELGRLGAPTYVLYQLPGGFNTFLREGTQEQIDKIMAFRGTGKQMWNSAITEPGAGSDVGSLKTTYTRRNGKIYLNGSKCFITSSAYTPYIVVMARDGASPDKPVYTEWFVDMSKPGIKVTKLEKLGLRMDSCCEITFDDVELDEKDMFGREGNGFNRVKEEFDHERFLVALTNYGTAMCAFEDAARYANQRVQFGEAIGRFQLIQEKFAHMAIKLNSMKNMLYEAAWKADNGTITSGDAAMCKYFCANAAFEVVDSAMQVLGGVGIAGNHRISRFWRDLRVDRVSGGSDEMQILTLGRAVLKQYR</sequence>
<organism>
    <name type="scientific">Escherichia coli O1:K1 / APEC</name>
    <dbReference type="NCBI Taxonomy" id="405955"/>
    <lineage>
        <taxon>Bacteria</taxon>
        <taxon>Pseudomonadati</taxon>
        <taxon>Pseudomonadota</taxon>
        <taxon>Gammaproteobacteria</taxon>
        <taxon>Enterobacterales</taxon>
        <taxon>Enterobacteriaceae</taxon>
        <taxon>Escherichia</taxon>
    </lineage>
</organism>